<sequence>MEKFTIYTGTTVPLMNDNIDTDQILPKQFLKLIDKKGFGKYLMYSWRYKDNKYTEDPDFVFNRPEYRKATILITGDNFGAGSSREHAAWALADYGFKVVIAGSFGDIHYNNELNNGMLPIVQPIEVRRKLEQLKPTDEVTVDLEQQKIISPVGEFTFEIDGEWKHKLLNGLDDIGITMQYEDLITEYEKHRPSYWQ</sequence>
<keyword id="KW-0028">Amino-acid biosynthesis</keyword>
<keyword id="KW-0100">Branched-chain amino acid biosynthesis</keyword>
<keyword id="KW-0432">Leucine biosynthesis</keyword>
<keyword id="KW-0456">Lyase</keyword>
<name>LEUD_STRT1</name>
<organism>
    <name type="scientific">Streptococcus thermophilus (strain CNRZ 1066)</name>
    <dbReference type="NCBI Taxonomy" id="299768"/>
    <lineage>
        <taxon>Bacteria</taxon>
        <taxon>Bacillati</taxon>
        <taxon>Bacillota</taxon>
        <taxon>Bacilli</taxon>
        <taxon>Lactobacillales</taxon>
        <taxon>Streptococcaceae</taxon>
        <taxon>Streptococcus</taxon>
    </lineage>
</organism>
<reference key="1">
    <citation type="journal article" date="2004" name="Nat. Biotechnol.">
        <title>Complete sequence and comparative genome analysis of the dairy bacterium Streptococcus thermophilus.</title>
        <authorList>
            <person name="Bolotin A."/>
            <person name="Quinquis B."/>
            <person name="Renault P."/>
            <person name="Sorokin A."/>
            <person name="Ehrlich S.D."/>
            <person name="Kulakauskas S."/>
            <person name="Lapidus A."/>
            <person name="Goltsman E."/>
            <person name="Mazur M."/>
            <person name="Pusch G.D."/>
            <person name="Fonstein M."/>
            <person name="Overbeek R."/>
            <person name="Kyprides N."/>
            <person name="Purnelle B."/>
            <person name="Prozzi D."/>
            <person name="Ngui K."/>
            <person name="Masuy D."/>
            <person name="Hancy F."/>
            <person name="Burteau S."/>
            <person name="Boutry M."/>
            <person name="Delcour J."/>
            <person name="Goffeau A."/>
            <person name="Hols P."/>
        </authorList>
    </citation>
    <scope>NUCLEOTIDE SEQUENCE [LARGE SCALE GENOMIC DNA]</scope>
    <source>
        <strain>CNRZ 1066</strain>
    </source>
</reference>
<proteinExistence type="inferred from homology"/>
<accession>Q5LZF5</accession>
<gene>
    <name evidence="1" type="primary">leuD</name>
    <name type="ordered locus">str1200</name>
</gene>
<protein>
    <recommendedName>
        <fullName evidence="1">3-isopropylmalate dehydratase small subunit</fullName>
        <ecNumber evidence="1">4.2.1.33</ecNumber>
    </recommendedName>
    <alternativeName>
        <fullName evidence="1">Alpha-IPM isomerase</fullName>
        <shortName evidence="1">IPMI</shortName>
    </alternativeName>
    <alternativeName>
        <fullName evidence="1">Isopropylmalate isomerase</fullName>
    </alternativeName>
</protein>
<comment type="function">
    <text evidence="1">Catalyzes the isomerization between 2-isopropylmalate and 3-isopropylmalate, via the formation of 2-isopropylmaleate.</text>
</comment>
<comment type="catalytic activity">
    <reaction evidence="1">
        <text>(2R,3S)-3-isopropylmalate = (2S)-2-isopropylmalate</text>
        <dbReference type="Rhea" id="RHEA:32287"/>
        <dbReference type="ChEBI" id="CHEBI:1178"/>
        <dbReference type="ChEBI" id="CHEBI:35121"/>
        <dbReference type="EC" id="4.2.1.33"/>
    </reaction>
</comment>
<comment type="pathway">
    <text evidence="1">Amino-acid biosynthesis; L-leucine biosynthesis; L-leucine from 3-methyl-2-oxobutanoate: step 2/4.</text>
</comment>
<comment type="subunit">
    <text evidence="1">Heterodimer of LeuC and LeuD.</text>
</comment>
<comment type="similarity">
    <text evidence="1">Belongs to the LeuD family. LeuD type 1 subfamily.</text>
</comment>
<evidence type="ECO:0000255" key="1">
    <source>
        <dbReference type="HAMAP-Rule" id="MF_01031"/>
    </source>
</evidence>
<feature type="chain" id="PRO_0000141896" description="3-isopropylmalate dehydratase small subunit">
    <location>
        <begin position="1"/>
        <end position="196"/>
    </location>
</feature>
<dbReference type="EC" id="4.2.1.33" evidence="1"/>
<dbReference type="EMBL" id="CP000024">
    <property type="protein sequence ID" value="AAV62745.1"/>
    <property type="molecule type" value="Genomic_DNA"/>
</dbReference>
<dbReference type="RefSeq" id="WP_011226115.1">
    <property type="nucleotide sequence ID" value="NC_006449.1"/>
</dbReference>
<dbReference type="SMR" id="Q5LZF5"/>
<dbReference type="GeneID" id="66898993"/>
<dbReference type="KEGG" id="stc:str1200"/>
<dbReference type="HOGENOM" id="CLU_081378_0_3_9"/>
<dbReference type="UniPathway" id="UPA00048">
    <property type="reaction ID" value="UER00071"/>
</dbReference>
<dbReference type="GO" id="GO:0009316">
    <property type="term" value="C:3-isopropylmalate dehydratase complex"/>
    <property type="evidence" value="ECO:0007669"/>
    <property type="project" value="InterPro"/>
</dbReference>
<dbReference type="GO" id="GO:0003861">
    <property type="term" value="F:3-isopropylmalate dehydratase activity"/>
    <property type="evidence" value="ECO:0007669"/>
    <property type="project" value="UniProtKB-UniRule"/>
</dbReference>
<dbReference type="GO" id="GO:0009098">
    <property type="term" value="P:L-leucine biosynthetic process"/>
    <property type="evidence" value="ECO:0007669"/>
    <property type="project" value="UniProtKB-UniRule"/>
</dbReference>
<dbReference type="CDD" id="cd01577">
    <property type="entry name" value="IPMI_Swivel"/>
    <property type="match status" value="1"/>
</dbReference>
<dbReference type="FunFam" id="3.20.19.10:FF:000003">
    <property type="entry name" value="3-isopropylmalate dehydratase small subunit"/>
    <property type="match status" value="1"/>
</dbReference>
<dbReference type="Gene3D" id="3.20.19.10">
    <property type="entry name" value="Aconitase, domain 4"/>
    <property type="match status" value="1"/>
</dbReference>
<dbReference type="HAMAP" id="MF_01031">
    <property type="entry name" value="LeuD_type1"/>
    <property type="match status" value="1"/>
</dbReference>
<dbReference type="InterPro" id="IPR004431">
    <property type="entry name" value="3-IsopropMal_deHydase_ssu"/>
</dbReference>
<dbReference type="InterPro" id="IPR015928">
    <property type="entry name" value="Aconitase/3IPM_dehydase_swvl"/>
</dbReference>
<dbReference type="InterPro" id="IPR000573">
    <property type="entry name" value="AconitaseA/IPMdHydase_ssu_swvl"/>
</dbReference>
<dbReference type="InterPro" id="IPR033940">
    <property type="entry name" value="IPMI_Swivel"/>
</dbReference>
<dbReference type="InterPro" id="IPR050075">
    <property type="entry name" value="LeuD"/>
</dbReference>
<dbReference type="NCBIfam" id="TIGR00171">
    <property type="entry name" value="leuD"/>
    <property type="match status" value="1"/>
</dbReference>
<dbReference type="NCBIfam" id="NF002458">
    <property type="entry name" value="PRK01641.1"/>
    <property type="match status" value="1"/>
</dbReference>
<dbReference type="PANTHER" id="PTHR43345:SF5">
    <property type="entry name" value="3-ISOPROPYLMALATE DEHYDRATASE SMALL SUBUNIT"/>
    <property type="match status" value="1"/>
</dbReference>
<dbReference type="PANTHER" id="PTHR43345">
    <property type="entry name" value="3-ISOPROPYLMALATE DEHYDRATASE SMALL SUBUNIT 2-RELATED-RELATED"/>
    <property type="match status" value="1"/>
</dbReference>
<dbReference type="Pfam" id="PF00694">
    <property type="entry name" value="Aconitase_C"/>
    <property type="match status" value="1"/>
</dbReference>
<dbReference type="SUPFAM" id="SSF52016">
    <property type="entry name" value="LeuD/IlvD-like"/>
    <property type="match status" value="1"/>
</dbReference>